<dbReference type="EC" id="3.1.26.3" evidence="1"/>
<dbReference type="EMBL" id="CP000255">
    <property type="protein sequence ID" value="ABD20557.1"/>
    <property type="molecule type" value="Genomic_DNA"/>
</dbReference>
<dbReference type="RefSeq" id="WP_000043237.1">
    <property type="nucleotide sequence ID" value="NZ_CP027476.1"/>
</dbReference>
<dbReference type="SMR" id="Q2FHK5"/>
<dbReference type="KEGG" id="saa:SAUSA300_1126"/>
<dbReference type="HOGENOM" id="CLU_000907_1_3_9"/>
<dbReference type="OMA" id="LTHKSCK"/>
<dbReference type="Proteomes" id="UP000001939">
    <property type="component" value="Chromosome"/>
</dbReference>
<dbReference type="GO" id="GO:0005737">
    <property type="term" value="C:cytoplasm"/>
    <property type="evidence" value="ECO:0007669"/>
    <property type="project" value="UniProtKB-SubCell"/>
</dbReference>
<dbReference type="GO" id="GO:0003725">
    <property type="term" value="F:double-stranded RNA binding"/>
    <property type="evidence" value="ECO:0007669"/>
    <property type="project" value="TreeGrafter"/>
</dbReference>
<dbReference type="GO" id="GO:0046872">
    <property type="term" value="F:metal ion binding"/>
    <property type="evidence" value="ECO:0007669"/>
    <property type="project" value="UniProtKB-KW"/>
</dbReference>
<dbReference type="GO" id="GO:0004525">
    <property type="term" value="F:ribonuclease III activity"/>
    <property type="evidence" value="ECO:0007669"/>
    <property type="project" value="UniProtKB-UniRule"/>
</dbReference>
<dbReference type="GO" id="GO:0019843">
    <property type="term" value="F:rRNA binding"/>
    <property type="evidence" value="ECO:0007669"/>
    <property type="project" value="UniProtKB-KW"/>
</dbReference>
<dbReference type="GO" id="GO:0006397">
    <property type="term" value="P:mRNA processing"/>
    <property type="evidence" value="ECO:0007669"/>
    <property type="project" value="UniProtKB-UniRule"/>
</dbReference>
<dbReference type="GO" id="GO:0010468">
    <property type="term" value="P:regulation of gene expression"/>
    <property type="evidence" value="ECO:0007669"/>
    <property type="project" value="TreeGrafter"/>
</dbReference>
<dbReference type="GO" id="GO:0006364">
    <property type="term" value="P:rRNA processing"/>
    <property type="evidence" value="ECO:0007669"/>
    <property type="project" value="UniProtKB-UniRule"/>
</dbReference>
<dbReference type="GO" id="GO:0008033">
    <property type="term" value="P:tRNA processing"/>
    <property type="evidence" value="ECO:0007669"/>
    <property type="project" value="UniProtKB-KW"/>
</dbReference>
<dbReference type="CDD" id="cd10845">
    <property type="entry name" value="DSRM_RNAse_III_family"/>
    <property type="match status" value="1"/>
</dbReference>
<dbReference type="CDD" id="cd00593">
    <property type="entry name" value="RIBOc"/>
    <property type="match status" value="1"/>
</dbReference>
<dbReference type="FunFam" id="1.10.1520.10:FF:000001">
    <property type="entry name" value="Ribonuclease 3"/>
    <property type="match status" value="1"/>
</dbReference>
<dbReference type="FunFam" id="3.30.160.20:FF:000003">
    <property type="entry name" value="Ribonuclease 3"/>
    <property type="match status" value="1"/>
</dbReference>
<dbReference type="Gene3D" id="3.30.160.20">
    <property type="match status" value="1"/>
</dbReference>
<dbReference type="Gene3D" id="1.10.1520.10">
    <property type="entry name" value="Ribonuclease III domain"/>
    <property type="match status" value="1"/>
</dbReference>
<dbReference type="HAMAP" id="MF_00104">
    <property type="entry name" value="RNase_III"/>
    <property type="match status" value="1"/>
</dbReference>
<dbReference type="InterPro" id="IPR014720">
    <property type="entry name" value="dsRBD_dom"/>
</dbReference>
<dbReference type="InterPro" id="IPR011907">
    <property type="entry name" value="RNase_III"/>
</dbReference>
<dbReference type="InterPro" id="IPR000999">
    <property type="entry name" value="RNase_III_dom"/>
</dbReference>
<dbReference type="InterPro" id="IPR036389">
    <property type="entry name" value="RNase_III_sf"/>
</dbReference>
<dbReference type="NCBIfam" id="TIGR02191">
    <property type="entry name" value="RNaseIII"/>
    <property type="match status" value="1"/>
</dbReference>
<dbReference type="PANTHER" id="PTHR11207:SF0">
    <property type="entry name" value="RIBONUCLEASE 3"/>
    <property type="match status" value="1"/>
</dbReference>
<dbReference type="PANTHER" id="PTHR11207">
    <property type="entry name" value="RIBONUCLEASE III"/>
    <property type="match status" value="1"/>
</dbReference>
<dbReference type="Pfam" id="PF00035">
    <property type="entry name" value="dsrm"/>
    <property type="match status" value="1"/>
</dbReference>
<dbReference type="Pfam" id="PF14622">
    <property type="entry name" value="Ribonucleas_3_3"/>
    <property type="match status" value="1"/>
</dbReference>
<dbReference type="SMART" id="SM00358">
    <property type="entry name" value="DSRM"/>
    <property type="match status" value="1"/>
</dbReference>
<dbReference type="SMART" id="SM00535">
    <property type="entry name" value="RIBOc"/>
    <property type="match status" value="1"/>
</dbReference>
<dbReference type="SUPFAM" id="SSF54768">
    <property type="entry name" value="dsRNA-binding domain-like"/>
    <property type="match status" value="1"/>
</dbReference>
<dbReference type="SUPFAM" id="SSF69065">
    <property type="entry name" value="RNase III domain-like"/>
    <property type="match status" value="1"/>
</dbReference>
<dbReference type="PROSITE" id="PS50137">
    <property type="entry name" value="DS_RBD"/>
    <property type="match status" value="1"/>
</dbReference>
<dbReference type="PROSITE" id="PS00517">
    <property type="entry name" value="RNASE_3_1"/>
    <property type="match status" value="1"/>
</dbReference>
<dbReference type="PROSITE" id="PS50142">
    <property type="entry name" value="RNASE_3_2"/>
    <property type="match status" value="1"/>
</dbReference>
<evidence type="ECO:0000255" key="1">
    <source>
        <dbReference type="HAMAP-Rule" id="MF_00104"/>
    </source>
</evidence>
<evidence type="ECO:0000256" key="2">
    <source>
        <dbReference type="SAM" id="MobiDB-lite"/>
    </source>
</evidence>
<name>RNC_STAA3</name>
<feature type="chain" id="PRO_1000075828" description="Ribonuclease 3">
    <location>
        <begin position="1"/>
        <end position="243"/>
    </location>
</feature>
<feature type="domain" description="RNase III" evidence="1">
    <location>
        <begin position="10"/>
        <end position="146"/>
    </location>
</feature>
<feature type="domain" description="DRBM" evidence="1">
    <location>
        <begin position="172"/>
        <end position="241"/>
    </location>
</feature>
<feature type="region of interest" description="Disordered" evidence="2">
    <location>
        <begin position="219"/>
        <end position="243"/>
    </location>
</feature>
<feature type="compositionally biased region" description="Basic and acidic residues" evidence="2">
    <location>
        <begin position="219"/>
        <end position="231"/>
    </location>
</feature>
<feature type="active site" evidence="1">
    <location>
        <position position="63"/>
    </location>
</feature>
<feature type="active site" evidence="1">
    <location>
        <position position="135"/>
    </location>
</feature>
<feature type="binding site" evidence="1">
    <location>
        <position position="59"/>
    </location>
    <ligand>
        <name>Mg(2+)</name>
        <dbReference type="ChEBI" id="CHEBI:18420"/>
    </ligand>
</feature>
<feature type="binding site" evidence="1">
    <location>
        <position position="132"/>
    </location>
    <ligand>
        <name>Mg(2+)</name>
        <dbReference type="ChEBI" id="CHEBI:18420"/>
    </ligand>
</feature>
<feature type="binding site" evidence="1">
    <location>
        <position position="135"/>
    </location>
    <ligand>
        <name>Mg(2+)</name>
        <dbReference type="ChEBI" id="CHEBI:18420"/>
    </ligand>
</feature>
<accession>Q2FHK5</accession>
<gene>
    <name evidence="1" type="primary">rnc</name>
    <name type="ordered locus">SAUSA300_1126</name>
</gene>
<protein>
    <recommendedName>
        <fullName evidence="1">Ribonuclease 3</fullName>
        <ecNumber evidence="1">3.1.26.3</ecNumber>
    </recommendedName>
    <alternativeName>
        <fullName evidence="1">Ribonuclease III</fullName>
        <shortName evidence="1">RNase III</shortName>
    </alternativeName>
</protein>
<organism>
    <name type="scientific">Staphylococcus aureus (strain USA300)</name>
    <dbReference type="NCBI Taxonomy" id="367830"/>
    <lineage>
        <taxon>Bacteria</taxon>
        <taxon>Bacillati</taxon>
        <taxon>Bacillota</taxon>
        <taxon>Bacilli</taxon>
        <taxon>Bacillales</taxon>
        <taxon>Staphylococcaceae</taxon>
        <taxon>Staphylococcus</taxon>
    </lineage>
</organism>
<keyword id="KW-0963">Cytoplasm</keyword>
<keyword id="KW-0255">Endonuclease</keyword>
<keyword id="KW-0378">Hydrolase</keyword>
<keyword id="KW-0460">Magnesium</keyword>
<keyword id="KW-0479">Metal-binding</keyword>
<keyword id="KW-0507">mRNA processing</keyword>
<keyword id="KW-0540">Nuclease</keyword>
<keyword id="KW-0694">RNA-binding</keyword>
<keyword id="KW-0698">rRNA processing</keyword>
<keyword id="KW-0699">rRNA-binding</keyword>
<keyword id="KW-0819">tRNA processing</keyword>
<comment type="function">
    <text evidence="1">Digests double-stranded RNA. Involved in the processing of primary rRNA transcript to yield the immediate precursors to the large and small rRNAs (23S and 16S). Processes some mRNAs, and tRNAs when they are encoded in the rRNA operon. Processes pre-crRNA and tracrRNA of type II CRISPR loci if present in the organism.</text>
</comment>
<comment type="catalytic activity">
    <reaction evidence="1">
        <text>Endonucleolytic cleavage to 5'-phosphomonoester.</text>
        <dbReference type="EC" id="3.1.26.3"/>
    </reaction>
</comment>
<comment type="cofactor">
    <cofactor evidence="1">
        <name>Mg(2+)</name>
        <dbReference type="ChEBI" id="CHEBI:18420"/>
    </cofactor>
</comment>
<comment type="subunit">
    <text evidence="1">Homodimer.</text>
</comment>
<comment type="subcellular location">
    <subcellularLocation>
        <location evidence="1">Cytoplasm</location>
    </subcellularLocation>
</comment>
<comment type="similarity">
    <text evidence="1">Belongs to the ribonuclease III family.</text>
</comment>
<sequence>MSKQKKSEIVNRFRKRFDTKMTELGFTYQNIDLYQQAFSHSSFINDFNMNRLDHNERLEFLGDAVLELTVSRYLFDKHPNLPEGNLTKMRATIVCEPSLVIFANKIGLNEMILLGKGEEKTGGRTRPSLISDAFEAFIGALYLDQGLDIVWKFAEKVIFPHVEQNELLGVVDFKTQFQEYVHQQNKGDVTYNLIKEEGPAHHRLFTSEVILQGEAIAEGKGKTKKESEQRAAESAYKQLKQIK</sequence>
<proteinExistence type="inferred from homology"/>
<reference key="1">
    <citation type="journal article" date="2006" name="Lancet">
        <title>Complete genome sequence of USA300, an epidemic clone of community-acquired meticillin-resistant Staphylococcus aureus.</title>
        <authorList>
            <person name="Diep B.A."/>
            <person name="Gill S.R."/>
            <person name="Chang R.F."/>
            <person name="Phan T.H."/>
            <person name="Chen J.H."/>
            <person name="Davidson M.G."/>
            <person name="Lin F."/>
            <person name="Lin J."/>
            <person name="Carleton H.A."/>
            <person name="Mongodin E.F."/>
            <person name="Sensabaugh G.F."/>
            <person name="Perdreau-Remington F."/>
        </authorList>
    </citation>
    <scope>NUCLEOTIDE SEQUENCE [LARGE SCALE GENOMIC DNA]</scope>
    <source>
        <strain>USA300</strain>
    </source>
</reference>